<reference key="1">
    <citation type="journal article" date="2008" name="Environ. Microbiol.">
        <title>The complete genome sequence of Moorella thermoacetica (f. Clostridium thermoaceticum).</title>
        <authorList>
            <person name="Pierce E."/>
            <person name="Xie G."/>
            <person name="Barabote R.D."/>
            <person name="Saunders E."/>
            <person name="Han C.S."/>
            <person name="Detter J.C."/>
            <person name="Richardson P."/>
            <person name="Brettin T.S."/>
            <person name="Das A."/>
            <person name="Ljungdahl L.G."/>
            <person name="Ragsdale S.W."/>
        </authorList>
    </citation>
    <scope>NUCLEOTIDE SEQUENCE [LARGE SCALE GENOMIC DNA]</scope>
    <source>
        <strain>ATCC 39073 / JCM 9320</strain>
    </source>
</reference>
<keyword id="KW-1003">Cell membrane</keyword>
<keyword id="KW-0407">Ion channel</keyword>
<keyword id="KW-0406">Ion transport</keyword>
<keyword id="KW-0472">Membrane</keyword>
<keyword id="KW-0479">Metal-binding</keyword>
<keyword id="KW-0915">Sodium</keyword>
<keyword id="KW-0812">Transmembrane</keyword>
<keyword id="KW-1133">Transmembrane helix</keyword>
<keyword id="KW-0813">Transport</keyword>
<proteinExistence type="inferred from homology"/>
<organism>
    <name type="scientific">Moorella thermoacetica (strain ATCC 39073 / JCM 9320)</name>
    <dbReference type="NCBI Taxonomy" id="264732"/>
    <lineage>
        <taxon>Bacteria</taxon>
        <taxon>Bacillati</taxon>
        <taxon>Bacillota</taxon>
        <taxon>Clostridia</taxon>
        <taxon>Moorellales</taxon>
        <taxon>Moorellaceae</taxon>
        <taxon>Moorella</taxon>
    </lineage>
</organism>
<protein>
    <recommendedName>
        <fullName evidence="1">Fluoride-specific ion channel FluC 2</fullName>
    </recommendedName>
</protein>
<sequence>MAWLYVGCGGIAGTLARFLLSRWLGNRVRGTWPLGTLFVNLSGAFLLGLLLALPQGRLPANVTLALGTGFVGAYTTFSTFTYETVTMIGDGEGKRALAYSLGSILGGLLLAWLGWLAAGSLF</sequence>
<accession>Q2RL34</accession>
<feature type="chain" id="PRO_0000252900" description="Fluoride-specific ion channel FluC 2">
    <location>
        <begin position="1"/>
        <end position="122"/>
    </location>
</feature>
<feature type="transmembrane region" description="Helical" evidence="1">
    <location>
        <begin position="1"/>
        <end position="21"/>
    </location>
</feature>
<feature type="transmembrane region" description="Helical" evidence="1">
    <location>
        <begin position="33"/>
        <end position="53"/>
    </location>
</feature>
<feature type="transmembrane region" description="Helical" evidence="1">
    <location>
        <begin position="62"/>
        <end position="82"/>
    </location>
</feature>
<feature type="transmembrane region" description="Helical" evidence="1">
    <location>
        <begin position="102"/>
        <end position="122"/>
    </location>
</feature>
<feature type="binding site" evidence="1">
    <location>
        <position position="72"/>
    </location>
    <ligand>
        <name>Na(+)</name>
        <dbReference type="ChEBI" id="CHEBI:29101"/>
        <note>structural</note>
    </ligand>
</feature>
<feature type="binding site" evidence="1">
    <location>
        <position position="75"/>
    </location>
    <ligand>
        <name>Na(+)</name>
        <dbReference type="ChEBI" id="CHEBI:29101"/>
        <note>structural</note>
    </ligand>
</feature>
<dbReference type="EMBL" id="CP000232">
    <property type="protein sequence ID" value="ABC18855.1"/>
    <property type="molecule type" value="Genomic_DNA"/>
</dbReference>
<dbReference type="RefSeq" id="YP_429398.1">
    <property type="nucleotide sequence ID" value="NC_007644.1"/>
</dbReference>
<dbReference type="SMR" id="Q2RL34"/>
<dbReference type="STRING" id="264732.Moth_0525"/>
<dbReference type="EnsemblBacteria" id="ABC18855">
    <property type="protein sequence ID" value="ABC18855"/>
    <property type="gene ID" value="Moth_0525"/>
</dbReference>
<dbReference type="KEGG" id="mta:Moth_0525"/>
<dbReference type="PATRIC" id="fig|264732.11.peg.566"/>
<dbReference type="eggNOG" id="COG0239">
    <property type="taxonomic scope" value="Bacteria"/>
</dbReference>
<dbReference type="HOGENOM" id="CLU_114342_2_3_9"/>
<dbReference type="OrthoDB" id="9815830at2"/>
<dbReference type="GO" id="GO:0005886">
    <property type="term" value="C:plasma membrane"/>
    <property type="evidence" value="ECO:0007669"/>
    <property type="project" value="UniProtKB-SubCell"/>
</dbReference>
<dbReference type="GO" id="GO:0062054">
    <property type="term" value="F:fluoride channel activity"/>
    <property type="evidence" value="ECO:0007669"/>
    <property type="project" value="UniProtKB-UniRule"/>
</dbReference>
<dbReference type="GO" id="GO:0046872">
    <property type="term" value="F:metal ion binding"/>
    <property type="evidence" value="ECO:0007669"/>
    <property type="project" value="UniProtKB-KW"/>
</dbReference>
<dbReference type="GO" id="GO:0140114">
    <property type="term" value="P:cellular detoxification of fluoride"/>
    <property type="evidence" value="ECO:0007669"/>
    <property type="project" value="UniProtKB-UniRule"/>
</dbReference>
<dbReference type="HAMAP" id="MF_00454">
    <property type="entry name" value="FluC"/>
    <property type="match status" value="1"/>
</dbReference>
<dbReference type="InterPro" id="IPR003691">
    <property type="entry name" value="FluC"/>
</dbReference>
<dbReference type="NCBIfam" id="TIGR00494">
    <property type="entry name" value="crcB"/>
    <property type="match status" value="1"/>
</dbReference>
<dbReference type="PANTHER" id="PTHR28259">
    <property type="entry name" value="FLUORIDE EXPORT PROTEIN 1-RELATED"/>
    <property type="match status" value="1"/>
</dbReference>
<dbReference type="PANTHER" id="PTHR28259:SF1">
    <property type="entry name" value="FLUORIDE EXPORT PROTEIN 1-RELATED"/>
    <property type="match status" value="1"/>
</dbReference>
<dbReference type="Pfam" id="PF02537">
    <property type="entry name" value="CRCB"/>
    <property type="match status" value="1"/>
</dbReference>
<evidence type="ECO:0000255" key="1">
    <source>
        <dbReference type="HAMAP-Rule" id="MF_00454"/>
    </source>
</evidence>
<comment type="function">
    <text evidence="1">Fluoride-specific ion channel. Important for reducing fluoride concentration in the cell, thus reducing its toxicity.</text>
</comment>
<comment type="catalytic activity">
    <reaction evidence="1">
        <text>fluoride(in) = fluoride(out)</text>
        <dbReference type="Rhea" id="RHEA:76159"/>
        <dbReference type="ChEBI" id="CHEBI:17051"/>
    </reaction>
    <physiologicalReaction direction="left-to-right" evidence="1">
        <dbReference type="Rhea" id="RHEA:76160"/>
    </physiologicalReaction>
</comment>
<comment type="activity regulation">
    <text evidence="1">Na(+) is not transported, but it plays an essential structural role and its presence is essential for fluoride channel function.</text>
</comment>
<comment type="subcellular location">
    <subcellularLocation>
        <location evidence="1">Cell membrane</location>
        <topology evidence="1">Multi-pass membrane protein</topology>
    </subcellularLocation>
</comment>
<comment type="similarity">
    <text evidence="1">Belongs to the fluoride channel Fluc/FEX (TC 1.A.43) family.</text>
</comment>
<name>FLUC2_MOOTA</name>
<gene>
    <name evidence="1" type="primary">fluC2</name>
    <name evidence="1" type="synonym">crcB2</name>
    <name type="ordered locus">Moth_0525</name>
</gene>